<comment type="function">
    <text evidence="2">NRPS-like enzyme with an unusual domain architecture that converts back glycine betaine to choline via a 2-step reduction mechanism, and thereby can be an alternative source of choline (PubMed:31061132). Permits direct reutilization of endogenously stored glycine betaine for on-demand biosynthesis of choline and choline derivatives, including phospholipid phosphatidylcholine (PC) which has an essential role in maintaining membrane integrity and functionality, or choline-O-sulfate, a mean for intracellular sulfate storage (PubMed:31061132). Glycine betaine is activated by the adenylation (A) domain, and transferred to the thiolation (T) domain (PubMed:31061132). Movement of the phosphopantetheine arm to the thioester reductase domain R1 then allows thioester reduction by NADPH of glycine betainoyl thioester to glycine betaine aldehyde, which is in turn reduced to choline by the aldehyde reductase domain R2 (PubMed:31061132).</text>
</comment>
<comment type="activity regulation">
    <text evidence="2">The tetramethylammonium ion, which mimics the head group of glycine betaine, acts as a competitive inhibitor of ATRR A domain, whereas the potency decreased by three orders of magnitude with dimethylammonium (PubMed:31061132). Choline is a mixed inhibitor for both glycine betaine reductase and aldehyde reductase activity but more potent in competition against glycine betaine in the first reduction step (PubMed:31061132). Therefore, choline could act as a feedback inhibitor to regulate ATRR enzymatic activity (PubMed:31061132). The lowered binding affinity of choline to R2 favors the release of choline after glycine betaine aldehyde reduction to avoid direct product inhibition (PubMed:31061132).</text>
</comment>
<comment type="biophysicochemical properties">
    <kinetics>
        <KM evidence="2">2.1 mM for glycine betaine</KM>
        <KM evidence="2">0.24 mM for glycine betaine aldehyde</KM>
        <KM evidence="2">5.8 mM for N,N-dimethylglycine</KM>
        <KM evidence="2">90 mM for 3,3,-dimethylbutyraldehyde (for the aldehyde reductase R2 domain alone)</KM>
    </kinetics>
</comment>
<comment type="domain">
    <text evidence="2">The NRPS-like protein ATRR has an unusual domain arcitecture (A-T-R1-R2), with the adenylation domain A activating and thioesterifying glycine betaine which is then channeled through the phosphopantetheine arm of the T domain, the thioester reductase domain R1 reducing glycine betainoyl thioester to glycine betaine aldehyde, and the aldehyde reductase domain R2 converting glycine betaine aldehyde into choline.</text>
</comment>
<comment type="disruption phenotype">
    <text evidence="2">Severely impairs the hyphae growth and conidiation at high level glycine betaine (PubMed:31061132). Exhibits a choline-auxotroph character, when the phosphatidylethanolamine N-methyltransferase choA is also deleted (PubMed:31061132).</text>
</comment>
<comment type="similarity">
    <text evidence="4">Belongs to the NRP synthetase family.</text>
</comment>
<keyword id="KW-0511">Multifunctional enzyme</keyword>
<keyword id="KW-0560">Oxidoreductase</keyword>
<keyword id="KW-0596">Phosphopantetheine</keyword>
<keyword id="KW-0597">Phosphoprotein</keyword>
<keyword id="KW-1185">Reference proteome</keyword>
<keyword id="KW-0677">Repeat</keyword>
<accession>A0A1U8QWA2</accession>
<accession>C8VGV9</accession>
<accession>Q5B2B2</accession>
<gene>
    <name evidence="3" type="primary">ATRR</name>
    <name type="ORF">AN5318</name>
    <name type="ORF">ANIA_05318</name>
</gene>
<reference key="1">
    <citation type="journal article" date="2005" name="Nature">
        <title>Sequencing of Aspergillus nidulans and comparative analysis with A. fumigatus and A. oryzae.</title>
        <authorList>
            <person name="Galagan J.E."/>
            <person name="Calvo S.E."/>
            <person name="Cuomo C."/>
            <person name="Ma L.-J."/>
            <person name="Wortman J.R."/>
            <person name="Batzoglou S."/>
            <person name="Lee S.-I."/>
            <person name="Bastuerkmen M."/>
            <person name="Spevak C.C."/>
            <person name="Clutterbuck J."/>
            <person name="Kapitonov V."/>
            <person name="Jurka J."/>
            <person name="Scazzocchio C."/>
            <person name="Farman M.L."/>
            <person name="Butler J."/>
            <person name="Purcell S."/>
            <person name="Harris S."/>
            <person name="Braus G.H."/>
            <person name="Draht O."/>
            <person name="Busch S."/>
            <person name="D'Enfert C."/>
            <person name="Bouchier C."/>
            <person name="Goldman G.H."/>
            <person name="Bell-Pedersen D."/>
            <person name="Griffiths-Jones S."/>
            <person name="Doonan J.H."/>
            <person name="Yu J."/>
            <person name="Vienken K."/>
            <person name="Pain A."/>
            <person name="Freitag M."/>
            <person name="Selker E.U."/>
            <person name="Archer D.B."/>
            <person name="Penalva M.A."/>
            <person name="Oakley B.R."/>
            <person name="Momany M."/>
            <person name="Tanaka T."/>
            <person name="Kumagai T."/>
            <person name="Asai K."/>
            <person name="Machida M."/>
            <person name="Nierman W.C."/>
            <person name="Denning D.W."/>
            <person name="Caddick M.X."/>
            <person name="Hynes M."/>
            <person name="Paoletti M."/>
            <person name="Fischer R."/>
            <person name="Miller B.L."/>
            <person name="Dyer P.S."/>
            <person name="Sachs M.S."/>
            <person name="Osmani S.A."/>
            <person name="Birren B.W."/>
        </authorList>
    </citation>
    <scope>NUCLEOTIDE SEQUENCE [LARGE SCALE GENOMIC DNA]</scope>
    <source>
        <strain>FGSC A4 / ATCC 38163 / CBS 112.46 / NRRL 194 / M139</strain>
    </source>
</reference>
<reference key="2">
    <citation type="journal article" date="2009" name="Fungal Genet. Biol.">
        <title>The 2008 update of the Aspergillus nidulans genome annotation: a community effort.</title>
        <authorList>
            <person name="Wortman J.R."/>
            <person name="Gilsenan J.M."/>
            <person name="Joardar V."/>
            <person name="Deegan J."/>
            <person name="Clutterbuck J."/>
            <person name="Andersen M.R."/>
            <person name="Archer D."/>
            <person name="Bencina M."/>
            <person name="Braus G."/>
            <person name="Coutinho P."/>
            <person name="von Dohren H."/>
            <person name="Doonan J."/>
            <person name="Driessen A.J."/>
            <person name="Durek P."/>
            <person name="Espeso E."/>
            <person name="Fekete E."/>
            <person name="Flipphi M."/>
            <person name="Estrada C.G."/>
            <person name="Geysens S."/>
            <person name="Goldman G."/>
            <person name="de Groot P.W."/>
            <person name="Hansen K."/>
            <person name="Harris S.D."/>
            <person name="Heinekamp T."/>
            <person name="Helmstaedt K."/>
            <person name="Henrissat B."/>
            <person name="Hofmann G."/>
            <person name="Homan T."/>
            <person name="Horio T."/>
            <person name="Horiuchi H."/>
            <person name="James S."/>
            <person name="Jones M."/>
            <person name="Karaffa L."/>
            <person name="Karanyi Z."/>
            <person name="Kato M."/>
            <person name="Keller N."/>
            <person name="Kelly D.E."/>
            <person name="Kiel J.A."/>
            <person name="Kim J.M."/>
            <person name="van der Klei I.J."/>
            <person name="Klis F.M."/>
            <person name="Kovalchuk A."/>
            <person name="Krasevec N."/>
            <person name="Kubicek C.P."/>
            <person name="Liu B."/>
            <person name="Maccabe A."/>
            <person name="Meyer V."/>
            <person name="Mirabito P."/>
            <person name="Miskei M."/>
            <person name="Mos M."/>
            <person name="Mullins J."/>
            <person name="Nelson D.R."/>
            <person name="Nielsen J."/>
            <person name="Oakley B.R."/>
            <person name="Osmani S.A."/>
            <person name="Pakula T."/>
            <person name="Paszewski A."/>
            <person name="Paulsen I."/>
            <person name="Pilsyk S."/>
            <person name="Pocsi I."/>
            <person name="Punt P.J."/>
            <person name="Ram A.F."/>
            <person name="Ren Q."/>
            <person name="Robellet X."/>
            <person name="Robson G."/>
            <person name="Seiboth B."/>
            <person name="van Solingen P."/>
            <person name="Specht T."/>
            <person name="Sun J."/>
            <person name="Taheri-Talesh N."/>
            <person name="Takeshita N."/>
            <person name="Ussery D."/>
            <person name="vanKuyk P.A."/>
            <person name="Visser H."/>
            <person name="van de Vondervoort P.J."/>
            <person name="de Vries R.P."/>
            <person name="Walton J."/>
            <person name="Xiang X."/>
            <person name="Xiong Y."/>
            <person name="Zeng A.P."/>
            <person name="Brandt B.W."/>
            <person name="Cornell M.J."/>
            <person name="van den Hondel C.A."/>
            <person name="Visser J."/>
            <person name="Oliver S.G."/>
            <person name="Turner G."/>
        </authorList>
    </citation>
    <scope>GENOME REANNOTATION</scope>
    <source>
        <strain>FGSC A4 / ATCC 38163 / CBS 112.46 / NRRL 194 / M139</strain>
    </source>
</reference>
<reference key="3">
    <citation type="journal article" date="2019" name="Proc. Natl. Acad. Sci. U.S.A.">
        <title>Structure-guided function discovery of an NRPS-like glycine betaine reductase for choline biosynthesis in fungi.</title>
        <authorList>
            <person name="Hai Y."/>
            <person name="Huang A.M."/>
            <person name="Tang Y."/>
        </authorList>
    </citation>
    <scope>FUNCTION</scope>
    <scope>DISRUPTION PHENOTYPE</scope>
    <scope>DOMAIN</scope>
    <scope>CATALYTIC ACTIVITY</scope>
    <scope>SUBSTRATE SPECIFICITY</scope>
    <scope>BIOPHYSICOCHEMICAL PROPERTIES</scope>
    <scope>MUTAGENESIS OF TYR-812; GLY-1036 AND TYR-1178</scope>
    <scope>ACTIVITY REGULATION</scope>
</reference>
<evidence type="ECO:0000255" key="1">
    <source>
        <dbReference type="PROSITE-ProRule" id="PRU00258"/>
    </source>
</evidence>
<evidence type="ECO:0000269" key="2">
    <source>
    </source>
</evidence>
<evidence type="ECO:0000303" key="3">
    <source>
    </source>
</evidence>
<evidence type="ECO:0000305" key="4"/>
<organism>
    <name type="scientific">Emericella nidulans (strain FGSC A4 / ATCC 38163 / CBS 112.46 / NRRL 194 / M139)</name>
    <name type="common">Aspergillus nidulans</name>
    <dbReference type="NCBI Taxonomy" id="227321"/>
    <lineage>
        <taxon>Eukaryota</taxon>
        <taxon>Fungi</taxon>
        <taxon>Dikarya</taxon>
        <taxon>Ascomycota</taxon>
        <taxon>Pezizomycotina</taxon>
        <taxon>Eurotiomycetes</taxon>
        <taxon>Eurotiomycetidae</taxon>
        <taxon>Eurotiales</taxon>
        <taxon>Aspergillaceae</taxon>
        <taxon>Aspergillus</taxon>
        <taxon>Aspergillus subgen. Nidulantes</taxon>
    </lineage>
</organism>
<sequence length="1270" mass="137536">MAIIDTTKDLSALFTQQVRASPNALALEDDKTSYTYAELDKEVEELSRRLRSYGVSRDSLVGVLLPRSAHFVIACLAALRAGGAFLVLELAYPPDLLADVLEDATPAVVVTHRSETGKIKGSVPVISLDEPPVDANGHTVEPGPLPVDDDLDRLAFVSYSSGTTGKPKGIANPHRAPVLSYNLRFGVQDLQPGDRVACNVFFIWEILRPLIRGATVVAVPDDHSYDPAALVDLLASRHITETLMTPTLLATILSRHSDIGARLPELRTLWLNGEVVTTDLARRAIRALPNTRLLNCYSACETHEIACGDIKEIVSDESQYCPVGPLLDPKHAYIVNEQGEKVEEGVSGELCVGGPMLARGYINRPETTAKAFIPDPFSNSPGAVMYRTGDRARMLPSGLLEITGRVGAMIKLRGYSVVPGKVENDIVKHLAVRQCAVVAHGEGLERQLVAYIVADQEHSEERPTVEINSSGHSPGARRALTKFLAHYMIPALWVQVDELPTHEVSGKIDLKRLPPPPTEVLANGNGKKEDPIGIEDIAAIWAVALKVPKATLKPEDNFFDLGGHSLSIADLSSRLSRKFGFRIPIVRLAENSTLSGHLDTVRAIRDGHTAAVQADLPAVLRTDATLDEEIRSDAKICSLTDAKTVLLTGVTGFLGAFLLKDLVDSTSAHIICLVRFNEPEDDDQPGGVARIRRNLLDLGLWNDSIMERVEILPGNLSRSRFGLTPDAFQELAQRVDVIVHAAASVNLVYPYAALRAANVGGTREILRLASQGGATVQYVSTNGVLPPSGEKGWPEDTMLDMKDVPTKLLDGYGQTKWVAEQLVLEAGRRGLPVRVHRIGTVSGHSQSGAANAWDLLTALIVESIKLGKYPDVEGWRAEMTPVDFVSKAIIHLANQTAVEQTVFHIGDPDPVNTRSVFEDLKTLGYPTEPLSWDDWVALWTSQRGHVKGGDGGFTVDILRSGMPSIEFLRGIVVLDNSATRPIRREVERPKVDRFLLETYTRHWFARGWLKRPPIRQRQLSPIPKGPLSGKVAVVTGASSGIGAAVATALAREGAHVALGARRLDALESLKEKLSASGVKVVTCKTDVTDRKQVEGLVKAATEELGPVDILVACAGVMYFTMMANTQMDEWERTVDVNCKGILNSLASTVPGMLARGKGHVVAISSDAGRKVFPGLGVYSASKFFVEATLQALRLETAGQGLRVTAVQPGNTATDLLGMSTDAEAIKKYGEPSGAQILDPEDVANSIIYALRQPEHVAMNEILIEPRDEPI</sequence>
<proteinExistence type="evidence at protein level"/>
<dbReference type="EC" id="1.2.1.-" evidence="2"/>
<dbReference type="EC" id="1.1.1.-" evidence="2"/>
<dbReference type="EMBL" id="AACD01000093">
    <property type="protein sequence ID" value="EAA62478.1"/>
    <property type="molecule type" value="Genomic_DNA"/>
</dbReference>
<dbReference type="EMBL" id="BN001305">
    <property type="protein sequence ID" value="CBF82109.1"/>
    <property type="molecule type" value="Genomic_DNA"/>
</dbReference>
<dbReference type="RefSeq" id="XP_662922.1">
    <property type="nucleotide sequence ID" value="XM_657830.1"/>
</dbReference>
<dbReference type="SMR" id="A0A1U8QWA2"/>
<dbReference type="STRING" id="227321.Q5B2B2"/>
<dbReference type="EnsemblFungi" id="CBF82109">
    <property type="protein sequence ID" value="CBF82109"/>
    <property type="gene ID" value="ANIA_05318"/>
</dbReference>
<dbReference type="GeneID" id="2871610"/>
<dbReference type="KEGG" id="ani:ANIA_05318"/>
<dbReference type="VEuPathDB" id="FungiDB:AN5318"/>
<dbReference type="eggNOG" id="KOG1178">
    <property type="taxonomic scope" value="Eukaryota"/>
</dbReference>
<dbReference type="eggNOG" id="KOG1205">
    <property type="taxonomic scope" value="Eukaryota"/>
</dbReference>
<dbReference type="HOGENOM" id="CLU_000022_2_17_1"/>
<dbReference type="InParanoid" id="A0A1U8QWA2"/>
<dbReference type="OMA" id="VYSACET"/>
<dbReference type="OrthoDB" id="408177at2759"/>
<dbReference type="Proteomes" id="UP000000560">
    <property type="component" value="Chromosome V"/>
</dbReference>
<dbReference type="GO" id="GO:0016491">
    <property type="term" value="F:oxidoreductase activity"/>
    <property type="evidence" value="ECO:0007669"/>
    <property type="project" value="UniProtKB-KW"/>
</dbReference>
<dbReference type="GO" id="GO:0031177">
    <property type="term" value="F:phosphopantetheine binding"/>
    <property type="evidence" value="ECO:0007669"/>
    <property type="project" value="InterPro"/>
</dbReference>
<dbReference type="GO" id="GO:0009058">
    <property type="term" value="P:biosynthetic process"/>
    <property type="evidence" value="ECO:0007669"/>
    <property type="project" value="UniProtKB-ARBA"/>
</dbReference>
<dbReference type="CDD" id="cd05930">
    <property type="entry name" value="A_NRPS"/>
    <property type="match status" value="1"/>
</dbReference>
<dbReference type="CDD" id="cd05235">
    <property type="entry name" value="SDR_e1"/>
    <property type="match status" value="1"/>
</dbReference>
<dbReference type="FunFam" id="3.40.50.720:FF:000047">
    <property type="entry name" value="NADP-dependent L-serine/L-allo-threonine dehydrogenase"/>
    <property type="match status" value="1"/>
</dbReference>
<dbReference type="Gene3D" id="3.30.300.30">
    <property type="match status" value="1"/>
</dbReference>
<dbReference type="Gene3D" id="1.10.1200.10">
    <property type="entry name" value="ACP-like"/>
    <property type="match status" value="1"/>
</dbReference>
<dbReference type="Gene3D" id="3.40.50.12780">
    <property type="entry name" value="N-terminal domain of ligase-like"/>
    <property type="match status" value="1"/>
</dbReference>
<dbReference type="Gene3D" id="3.40.50.720">
    <property type="entry name" value="NAD(P)-binding Rossmann-like Domain"/>
    <property type="match status" value="2"/>
</dbReference>
<dbReference type="InterPro" id="IPR036736">
    <property type="entry name" value="ACP-like_sf"/>
</dbReference>
<dbReference type="InterPro" id="IPR045851">
    <property type="entry name" value="AMP-bd_C_sf"/>
</dbReference>
<dbReference type="InterPro" id="IPR020845">
    <property type="entry name" value="AMP-binding_CS"/>
</dbReference>
<dbReference type="InterPro" id="IPR000873">
    <property type="entry name" value="AMP-dep_synth/lig_dom"/>
</dbReference>
<dbReference type="InterPro" id="IPR042099">
    <property type="entry name" value="ANL_N_sf"/>
</dbReference>
<dbReference type="InterPro" id="IPR013120">
    <property type="entry name" value="Far_NAD-bd"/>
</dbReference>
<dbReference type="InterPro" id="IPR036291">
    <property type="entry name" value="NAD(P)-bd_dom_sf"/>
</dbReference>
<dbReference type="InterPro" id="IPR020806">
    <property type="entry name" value="PKS_PP-bd"/>
</dbReference>
<dbReference type="InterPro" id="IPR009081">
    <property type="entry name" value="PP-bd_ACP"/>
</dbReference>
<dbReference type="InterPro" id="IPR006162">
    <property type="entry name" value="Ppantetheine_attach_site"/>
</dbReference>
<dbReference type="InterPro" id="IPR002347">
    <property type="entry name" value="SDR_fam"/>
</dbReference>
<dbReference type="InterPro" id="IPR010080">
    <property type="entry name" value="Thioester_reductase-like_dom"/>
</dbReference>
<dbReference type="NCBIfam" id="TIGR01746">
    <property type="entry name" value="Thioester-redct"/>
    <property type="match status" value="1"/>
</dbReference>
<dbReference type="PANTHER" id="PTHR44845:SF6">
    <property type="entry name" value="BETA-ALANINE-ACTIVATING ENZYME"/>
    <property type="match status" value="1"/>
</dbReference>
<dbReference type="PANTHER" id="PTHR44845">
    <property type="entry name" value="CARRIER DOMAIN-CONTAINING PROTEIN"/>
    <property type="match status" value="1"/>
</dbReference>
<dbReference type="Pfam" id="PF00106">
    <property type="entry name" value="adh_short"/>
    <property type="match status" value="1"/>
</dbReference>
<dbReference type="Pfam" id="PF00501">
    <property type="entry name" value="AMP-binding"/>
    <property type="match status" value="1"/>
</dbReference>
<dbReference type="Pfam" id="PF07993">
    <property type="entry name" value="NAD_binding_4"/>
    <property type="match status" value="1"/>
</dbReference>
<dbReference type="Pfam" id="PF00550">
    <property type="entry name" value="PP-binding"/>
    <property type="match status" value="1"/>
</dbReference>
<dbReference type="PRINTS" id="PR00081">
    <property type="entry name" value="GDHRDH"/>
</dbReference>
<dbReference type="SMART" id="SM00822">
    <property type="entry name" value="PKS_KR"/>
    <property type="match status" value="1"/>
</dbReference>
<dbReference type="SMART" id="SM00823">
    <property type="entry name" value="PKS_PP"/>
    <property type="match status" value="1"/>
</dbReference>
<dbReference type="SUPFAM" id="SSF56801">
    <property type="entry name" value="Acetyl-CoA synthetase-like"/>
    <property type="match status" value="1"/>
</dbReference>
<dbReference type="SUPFAM" id="SSF47336">
    <property type="entry name" value="ACP-like"/>
    <property type="match status" value="1"/>
</dbReference>
<dbReference type="SUPFAM" id="SSF51735">
    <property type="entry name" value="NAD(P)-binding Rossmann-fold domains"/>
    <property type="match status" value="2"/>
</dbReference>
<dbReference type="PROSITE" id="PS00455">
    <property type="entry name" value="AMP_BINDING"/>
    <property type="match status" value="1"/>
</dbReference>
<dbReference type="PROSITE" id="PS50075">
    <property type="entry name" value="CARRIER"/>
    <property type="match status" value="1"/>
</dbReference>
<dbReference type="PROSITE" id="PS00012">
    <property type="entry name" value="PHOSPHOPANTETHEINE"/>
    <property type="match status" value="1"/>
</dbReference>
<protein>
    <recommendedName>
        <fullName evidence="3">Glycine betaine reductase ATRR</fullName>
    </recommendedName>
    <alternativeName>
        <fullName evidence="3">Nonribosomal peptide synthetase-like protein ATRR</fullName>
    </alternativeName>
    <domain>
        <recommendedName>
            <fullName evidence="3">Carboxylic acid reductase</fullName>
            <ecNumber evidence="2">1.2.1.-</ecNumber>
        </recommendedName>
    </domain>
    <domain>
        <recommendedName>
            <fullName evidence="3">Aldehyde reductase</fullName>
            <ecNumber evidence="2">1.1.1.-</ecNumber>
        </recommendedName>
    </domain>
</protein>
<name>ATR12_EMENI</name>
<feature type="chain" id="PRO_0000454493" description="Glycine betaine reductase ATRR">
    <location>
        <begin position="1"/>
        <end position="1270"/>
    </location>
</feature>
<feature type="domain" description="Carrier" evidence="1">
    <location>
        <begin position="528"/>
        <end position="605"/>
    </location>
</feature>
<feature type="region of interest" description="Adenylation (A) domain" evidence="2">
    <location>
        <begin position="14"/>
        <end position="418"/>
    </location>
</feature>
<feature type="region of interest" description="Carboxylic acid reductase domain R1" evidence="2">
    <location>
        <begin position="643"/>
        <end position="937"/>
    </location>
</feature>
<feature type="region of interest" description="Aldehyde reductase domain R2" evidence="2">
    <location>
        <begin position="1026"/>
        <end position="1256"/>
    </location>
</feature>
<feature type="modified residue" description="O-(pantetheine 4'-phosphoryl)serine" evidence="1">
    <location>
        <position position="565"/>
    </location>
</feature>
<feature type="mutagenesis site" description="Abolishes overall carboxylic acid reductase activity but does nor affect aldehyde reductase activity." evidence="2">
    <original>Y</original>
    <variation>F</variation>
    <location>
        <position position="812"/>
    </location>
</feature>
<feature type="mutagenesis site" description="Compromises binding of the cosubstrate NADPH to aldehyde reductase domain R2. Decreases the aldehyde reductase activity by 4,000-fold; when associated with F-1178." evidence="2">
    <original>G</original>
    <variation>A</variation>
    <location>
        <position position="1036"/>
    </location>
</feature>
<feature type="mutagenesis site" description="Does not substantially affect carboxylic acid reductase activity but results to a 150-fold loss of aldehyde reductase activity and the accumulation of glycine betaine aldehyde intermediate. Further decreases the aldehyde reductase activity by 4,000-fold; when associated with F-1178." evidence="2">
    <original>Y</original>
    <variation>F</variation>
    <location>
        <position position="1178"/>
    </location>
</feature>